<dbReference type="EC" id="4.3.2.10" evidence="1"/>
<dbReference type="EC" id="3.5.1.2" evidence="1"/>
<dbReference type="EMBL" id="CP001177">
    <property type="protein sequence ID" value="ACJ80363.1"/>
    <property type="molecule type" value="Genomic_DNA"/>
</dbReference>
<dbReference type="SMR" id="B7HKD2"/>
<dbReference type="MEROPS" id="C26.965"/>
<dbReference type="KEGG" id="bcr:BCAH187_A1567"/>
<dbReference type="HOGENOM" id="CLU_071837_2_2_9"/>
<dbReference type="UniPathway" id="UPA00031">
    <property type="reaction ID" value="UER00010"/>
</dbReference>
<dbReference type="Proteomes" id="UP000002214">
    <property type="component" value="Chromosome"/>
</dbReference>
<dbReference type="GO" id="GO:0005737">
    <property type="term" value="C:cytoplasm"/>
    <property type="evidence" value="ECO:0007669"/>
    <property type="project" value="UniProtKB-SubCell"/>
</dbReference>
<dbReference type="GO" id="GO:0004359">
    <property type="term" value="F:glutaminase activity"/>
    <property type="evidence" value="ECO:0007669"/>
    <property type="project" value="UniProtKB-EC"/>
</dbReference>
<dbReference type="GO" id="GO:0000107">
    <property type="term" value="F:imidazoleglycerol-phosphate synthase activity"/>
    <property type="evidence" value="ECO:0007669"/>
    <property type="project" value="UniProtKB-UniRule"/>
</dbReference>
<dbReference type="GO" id="GO:0016829">
    <property type="term" value="F:lyase activity"/>
    <property type="evidence" value="ECO:0007669"/>
    <property type="project" value="UniProtKB-KW"/>
</dbReference>
<dbReference type="GO" id="GO:0000105">
    <property type="term" value="P:L-histidine biosynthetic process"/>
    <property type="evidence" value="ECO:0007669"/>
    <property type="project" value="UniProtKB-UniRule"/>
</dbReference>
<dbReference type="CDD" id="cd01748">
    <property type="entry name" value="GATase1_IGP_Synthase"/>
    <property type="match status" value="1"/>
</dbReference>
<dbReference type="FunFam" id="3.40.50.880:FF:000028">
    <property type="entry name" value="Imidazole glycerol phosphate synthase subunit HisH"/>
    <property type="match status" value="1"/>
</dbReference>
<dbReference type="Gene3D" id="3.40.50.880">
    <property type="match status" value="1"/>
</dbReference>
<dbReference type="HAMAP" id="MF_00278">
    <property type="entry name" value="HisH"/>
    <property type="match status" value="1"/>
</dbReference>
<dbReference type="InterPro" id="IPR029062">
    <property type="entry name" value="Class_I_gatase-like"/>
</dbReference>
<dbReference type="InterPro" id="IPR017926">
    <property type="entry name" value="GATASE"/>
</dbReference>
<dbReference type="InterPro" id="IPR010139">
    <property type="entry name" value="Imidazole-glycPsynth_HisH"/>
</dbReference>
<dbReference type="NCBIfam" id="TIGR01855">
    <property type="entry name" value="IMP_synth_hisH"/>
    <property type="match status" value="1"/>
</dbReference>
<dbReference type="PANTHER" id="PTHR42701">
    <property type="entry name" value="IMIDAZOLE GLYCEROL PHOSPHATE SYNTHASE SUBUNIT HISH"/>
    <property type="match status" value="1"/>
</dbReference>
<dbReference type="PANTHER" id="PTHR42701:SF1">
    <property type="entry name" value="IMIDAZOLE GLYCEROL PHOSPHATE SYNTHASE SUBUNIT HISH"/>
    <property type="match status" value="1"/>
</dbReference>
<dbReference type="Pfam" id="PF00117">
    <property type="entry name" value="GATase"/>
    <property type="match status" value="1"/>
</dbReference>
<dbReference type="PIRSF" id="PIRSF000495">
    <property type="entry name" value="Amidotransf_hisH"/>
    <property type="match status" value="1"/>
</dbReference>
<dbReference type="SUPFAM" id="SSF52317">
    <property type="entry name" value="Class I glutamine amidotransferase-like"/>
    <property type="match status" value="1"/>
</dbReference>
<dbReference type="PROSITE" id="PS51273">
    <property type="entry name" value="GATASE_TYPE_1"/>
    <property type="match status" value="1"/>
</dbReference>
<proteinExistence type="inferred from homology"/>
<sequence>MIAIIDYGMGNIRSVEQALKHIGAAYIVTSDKEEIFRSDGVILPGVGAFPKAMDVLEEKDLVRVLQEIGRSRKPLLGICLGMQLLFEKSEELQDCNGLSLLPGVIRKLKVPYKIPHMGWNELKKEGEIALWNGVEDGSFVYYVHSYYADCPNEIVYGISEYGVKVPGFVAKGNIYGAQFHPEKSGDIGMQMLKNFKGVVETWKSSQLSI</sequence>
<gene>
    <name evidence="1" type="primary">hisH</name>
    <name type="ordered locus">BCAH187_A1567</name>
</gene>
<name>HIS5_BACC7</name>
<feature type="chain" id="PRO_1000119372" description="Imidazole glycerol phosphate synthase subunit HisH">
    <location>
        <begin position="1"/>
        <end position="209"/>
    </location>
</feature>
<feature type="domain" description="Glutamine amidotransferase type-1" evidence="1">
    <location>
        <begin position="1"/>
        <end position="205"/>
    </location>
</feature>
<feature type="active site" description="Nucleophile" evidence="1">
    <location>
        <position position="79"/>
    </location>
</feature>
<feature type="active site" evidence="1">
    <location>
        <position position="180"/>
    </location>
</feature>
<feature type="active site" evidence="1">
    <location>
        <position position="182"/>
    </location>
</feature>
<protein>
    <recommendedName>
        <fullName evidence="1">Imidazole glycerol phosphate synthase subunit HisH</fullName>
        <ecNumber evidence="1">4.3.2.10</ecNumber>
    </recommendedName>
    <alternativeName>
        <fullName evidence="1">IGP synthase glutaminase subunit</fullName>
        <ecNumber evidence="1">3.5.1.2</ecNumber>
    </alternativeName>
    <alternativeName>
        <fullName evidence="1">IGP synthase subunit HisH</fullName>
    </alternativeName>
    <alternativeName>
        <fullName evidence="1">ImGP synthase subunit HisH</fullName>
        <shortName evidence="1">IGPS subunit HisH</shortName>
    </alternativeName>
</protein>
<accession>B7HKD2</accession>
<comment type="function">
    <text evidence="1">IGPS catalyzes the conversion of PRFAR and glutamine to IGP, AICAR and glutamate. The HisH subunit catalyzes the hydrolysis of glutamine to glutamate and ammonia as part of the synthesis of IGP and AICAR. The resulting ammonia molecule is channeled to the active site of HisF.</text>
</comment>
<comment type="catalytic activity">
    <reaction evidence="1">
        <text>5-[(5-phospho-1-deoxy-D-ribulos-1-ylimino)methylamino]-1-(5-phospho-beta-D-ribosyl)imidazole-4-carboxamide + L-glutamine = D-erythro-1-(imidazol-4-yl)glycerol 3-phosphate + 5-amino-1-(5-phospho-beta-D-ribosyl)imidazole-4-carboxamide + L-glutamate + H(+)</text>
        <dbReference type="Rhea" id="RHEA:24793"/>
        <dbReference type="ChEBI" id="CHEBI:15378"/>
        <dbReference type="ChEBI" id="CHEBI:29985"/>
        <dbReference type="ChEBI" id="CHEBI:58278"/>
        <dbReference type="ChEBI" id="CHEBI:58359"/>
        <dbReference type="ChEBI" id="CHEBI:58475"/>
        <dbReference type="ChEBI" id="CHEBI:58525"/>
        <dbReference type="EC" id="4.3.2.10"/>
    </reaction>
</comment>
<comment type="catalytic activity">
    <reaction evidence="1">
        <text>L-glutamine + H2O = L-glutamate + NH4(+)</text>
        <dbReference type="Rhea" id="RHEA:15889"/>
        <dbReference type="ChEBI" id="CHEBI:15377"/>
        <dbReference type="ChEBI" id="CHEBI:28938"/>
        <dbReference type="ChEBI" id="CHEBI:29985"/>
        <dbReference type="ChEBI" id="CHEBI:58359"/>
        <dbReference type="EC" id="3.5.1.2"/>
    </reaction>
</comment>
<comment type="pathway">
    <text evidence="1">Amino-acid biosynthesis; L-histidine biosynthesis; L-histidine from 5-phospho-alpha-D-ribose 1-diphosphate: step 5/9.</text>
</comment>
<comment type="subunit">
    <text evidence="1">Heterodimer of HisH and HisF.</text>
</comment>
<comment type="subcellular location">
    <subcellularLocation>
        <location evidence="1">Cytoplasm</location>
    </subcellularLocation>
</comment>
<organism>
    <name type="scientific">Bacillus cereus (strain AH187)</name>
    <dbReference type="NCBI Taxonomy" id="405534"/>
    <lineage>
        <taxon>Bacteria</taxon>
        <taxon>Bacillati</taxon>
        <taxon>Bacillota</taxon>
        <taxon>Bacilli</taxon>
        <taxon>Bacillales</taxon>
        <taxon>Bacillaceae</taxon>
        <taxon>Bacillus</taxon>
        <taxon>Bacillus cereus group</taxon>
    </lineage>
</organism>
<reference key="1">
    <citation type="submission" date="2008-10" db="EMBL/GenBank/DDBJ databases">
        <title>Genome sequence of Bacillus cereus AH187.</title>
        <authorList>
            <person name="Dodson R.J."/>
            <person name="Durkin A.S."/>
            <person name="Rosovitz M.J."/>
            <person name="Rasko D.A."/>
            <person name="Kolsto A.B."/>
            <person name="Okstad O.A."/>
            <person name="Ravel J."/>
            <person name="Sutton G."/>
        </authorList>
    </citation>
    <scope>NUCLEOTIDE SEQUENCE [LARGE SCALE GENOMIC DNA]</scope>
    <source>
        <strain>AH187</strain>
    </source>
</reference>
<keyword id="KW-0028">Amino-acid biosynthesis</keyword>
<keyword id="KW-0963">Cytoplasm</keyword>
<keyword id="KW-0315">Glutamine amidotransferase</keyword>
<keyword id="KW-0368">Histidine biosynthesis</keyword>
<keyword id="KW-0378">Hydrolase</keyword>
<keyword id="KW-0456">Lyase</keyword>
<evidence type="ECO:0000255" key="1">
    <source>
        <dbReference type="HAMAP-Rule" id="MF_00278"/>
    </source>
</evidence>